<feature type="chain" id="PRO_0000406254" description="FAD synthase">
    <location>
        <begin position="1"/>
        <end position="150"/>
    </location>
</feature>
<feature type="binding site" evidence="1">
    <location>
        <begin position="11"/>
        <end position="12"/>
    </location>
    <ligand>
        <name>ATP</name>
        <dbReference type="ChEBI" id="CHEBI:30616"/>
    </ligand>
</feature>
<feature type="binding site" evidence="1">
    <location>
        <begin position="16"/>
        <end position="19"/>
    </location>
    <ligand>
        <name>ATP</name>
        <dbReference type="ChEBI" id="CHEBI:30616"/>
    </ligand>
</feature>
<feature type="binding site" evidence="1">
    <location>
        <position position="96"/>
    </location>
    <ligand>
        <name>ATP</name>
        <dbReference type="ChEBI" id="CHEBI:30616"/>
    </ligand>
</feature>
<feature type="binding site" evidence="1">
    <location>
        <position position="124"/>
    </location>
    <ligand>
        <name>ATP</name>
        <dbReference type="ChEBI" id="CHEBI:30616"/>
    </ligand>
</feature>
<gene>
    <name evidence="1" type="primary">ribL</name>
    <name type="ordered locus">MMP0943</name>
</gene>
<proteinExistence type="inferred from homology"/>
<reference key="1">
    <citation type="journal article" date="2004" name="J. Bacteriol.">
        <title>Complete genome sequence of the genetically tractable hydrogenotrophic methanogen Methanococcus maripaludis.</title>
        <authorList>
            <person name="Hendrickson E.L."/>
            <person name="Kaul R."/>
            <person name="Zhou Y."/>
            <person name="Bovee D."/>
            <person name="Chapman P."/>
            <person name="Chung J."/>
            <person name="Conway de Macario E."/>
            <person name="Dodsworth J.A."/>
            <person name="Gillett W."/>
            <person name="Graham D.E."/>
            <person name="Hackett M."/>
            <person name="Haydock A.K."/>
            <person name="Kang A."/>
            <person name="Land M.L."/>
            <person name="Levy R."/>
            <person name="Lie T.J."/>
            <person name="Major T.A."/>
            <person name="Moore B.C."/>
            <person name="Porat I."/>
            <person name="Palmeiri A."/>
            <person name="Rouse G."/>
            <person name="Saenphimmachak C."/>
            <person name="Soell D."/>
            <person name="Van Dien S."/>
            <person name="Wang T."/>
            <person name="Whitman W.B."/>
            <person name="Xia Q."/>
            <person name="Zhang Y."/>
            <person name="Larimer F.W."/>
            <person name="Olson M.V."/>
            <person name="Leigh J.A."/>
        </authorList>
    </citation>
    <scope>NUCLEOTIDE SEQUENCE [LARGE SCALE GENOMIC DNA]</scope>
    <source>
        <strain>DSM 14266 / JCM 13030 / NBRC 101832 / S2 / LL</strain>
    </source>
</reference>
<accession>Q6LYP5</accession>
<sequence length="150" mass="17170">MEKKIAVTAGTFDLLHPGHFNTLNFAKKHADELVVIIARDETVKKIKGRSPVIPEEQRKIMIEALKPVDRAVLGSLTNKLEPILEIRPDVIVLGPDQTTYQINELKAQLAEHSLYPEILKVEDYVKCPFHSSYDILKEIVRRWCCKELKV</sequence>
<comment type="function">
    <text evidence="1">Catalyzes the transfer of the AMP portion of ATP to flavin mononucleotide (FMN) to produce flavin adenine dinucleotide (FAD) coenzyme.</text>
</comment>
<comment type="catalytic activity">
    <reaction evidence="1">
        <text>FMN + ATP + H(+) = FAD + diphosphate</text>
        <dbReference type="Rhea" id="RHEA:17237"/>
        <dbReference type="ChEBI" id="CHEBI:15378"/>
        <dbReference type="ChEBI" id="CHEBI:30616"/>
        <dbReference type="ChEBI" id="CHEBI:33019"/>
        <dbReference type="ChEBI" id="CHEBI:57692"/>
        <dbReference type="ChEBI" id="CHEBI:58210"/>
        <dbReference type="EC" id="2.7.7.2"/>
    </reaction>
</comment>
<comment type="cofactor">
    <cofactor evidence="1">
        <name>a divalent metal cation</name>
        <dbReference type="ChEBI" id="CHEBI:60240"/>
    </cofactor>
</comment>
<comment type="pathway">
    <text evidence="1">Cofactor biosynthesis; FAD biosynthesis; FAD from FMN: step 1/1.</text>
</comment>
<comment type="subunit">
    <text evidence="1">Homodimer.</text>
</comment>
<comment type="similarity">
    <text evidence="1">Belongs to the archaeal FAD synthase family.</text>
</comment>
<keyword id="KW-0067">ATP-binding</keyword>
<keyword id="KW-0274">FAD</keyword>
<keyword id="KW-0285">Flavoprotein</keyword>
<keyword id="KW-0288">FMN</keyword>
<keyword id="KW-0547">Nucleotide-binding</keyword>
<keyword id="KW-0548">Nucleotidyltransferase</keyword>
<keyword id="KW-1185">Reference proteome</keyword>
<keyword id="KW-0808">Transferase</keyword>
<protein>
    <recommendedName>
        <fullName evidence="1">FAD synthase</fullName>
        <ecNumber evidence="1">2.7.7.2</ecNumber>
    </recommendedName>
    <alternativeName>
        <fullName evidence="1">FMN adenylyltransferase</fullName>
    </alternativeName>
    <alternativeName>
        <fullName evidence="1">Flavin adenine dinucleotide synthase</fullName>
    </alternativeName>
</protein>
<dbReference type="EC" id="2.7.7.2" evidence="1"/>
<dbReference type="EMBL" id="BX950229">
    <property type="protein sequence ID" value="CAF30499.1"/>
    <property type="molecule type" value="Genomic_DNA"/>
</dbReference>
<dbReference type="RefSeq" id="WP_011170887.1">
    <property type="nucleotide sequence ID" value="NC_005791.1"/>
</dbReference>
<dbReference type="SMR" id="Q6LYP5"/>
<dbReference type="STRING" id="267377.MMP0943"/>
<dbReference type="EnsemblBacteria" id="CAF30499">
    <property type="protein sequence ID" value="CAF30499"/>
    <property type="gene ID" value="MMP0943"/>
</dbReference>
<dbReference type="GeneID" id="2761431"/>
<dbReference type="KEGG" id="mmp:MMP0943"/>
<dbReference type="PATRIC" id="fig|267377.15.peg.971"/>
<dbReference type="eggNOG" id="arCOG01222">
    <property type="taxonomic scope" value="Archaea"/>
</dbReference>
<dbReference type="HOGENOM" id="CLU_034585_2_1_2"/>
<dbReference type="OrthoDB" id="1912at2157"/>
<dbReference type="UniPathway" id="UPA00277">
    <property type="reaction ID" value="UER00407"/>
</dbReference>
<dbReference type="Proteomes" id="UP000000590">
    <property type="component" value="Chromosome"/>
</dbReference>
<dbReference type="GO" id="GO:0005524">
    <property type="term" value="F:ATP binding"/>
    <property type="evidence" value="ECO:0007669"/>
    <property type="project" value="UniProtKB-UniRule"/>
</dbReference>
<dbReference type="GO" id="GO:0003919">
    <property type="term" value="F:FMN adenylyltransferase activity"/>
    <property type="evidence" value="ECO:0007669"/>
    <property type="project" value="UniProtKB-UniRule"/>
</dbReference>
<dbReference type="GO" id="GO:0006747">
    <property type="term" value="P:FAD biosynthetic process"/>
    <property type="evidence" value="ECO:0007669"/>
    <property type="project" value="UniProtKB-UniRule"/>
</dbReference>
<dbReference type="GO" id="GO:0046444">
    <property type="term" value="P:FMN metabolic process"/>
    <property type="evidence" value="ECO:0007669"/>
    <property type="project" value="UniProtKB-UniRule"/>
</dbReference>
<dbReference type="Gene3D" id="3.40.50.620">
    <property type="entry name" value="HUPs"/>
    <property type="match status" value="1"/>
</dbReference>
<dbReference type="HAMAP" id="MF_02115">
    <property type="entry name" value="FAD_synth_arch"/>
    <property type="match status" value="1"/>
</dbReference>
<dbReference type="InterPro" id="IPR050385">
    <property type="entry name" value="Archaeal_FAD_synthase"/>
</dbReference>
<dbReference type="InterPro" id="IPR004821">
    <property type="entry name" value="Cyt_trans-like"/>
</dbReference>
<dbReference type="InterPro" id="IPR024902">
    <property type="entry name" value="FAD_synth_RibL"/>
</dbReference>
<dbReference type="InterPro" id="IPR014729">
    <property type="entry name" value="Rossmann-like_a/b/a_fold"/>
</dbReference>
<dbReference type="NCBIfam" id="TIGR00125">
    <property type="entry name" value="cyt_tran_rel"/>
    <property type="match status" value="1"/>
</dbReference>
<dbReference type="PANTHER" id="PTHR43793">
    <property type="entry name" value="FAD SYNTHASE"/>
    <property type="match status" value="1"/>
</dbReference>
<dbReference type="PANTHER" id="PTHR43793:SF1">
    <property type="entry name" value="FAD SYNTHASE"/>
    <property type="match status" value="1"/>
</dbReference>
<dbReference type="Pfam" id="PF01467">
    <property type="entry name" value="CTP_transf_like"/>
    <property type="match status" value="1"/>
</dbReference>
<dbReference type="SUPFAM" id="SSF52374">
    <property type="entry name" value="Nucleotidylyl transferase"/>
    <property type="match status" value="1"/>
</dbReference>
<name>RIBL_METMP</name>
<evidence type="ECO:0000255" key="1">
    <source>
        <dbReference type="HAMAP-Rule" id="MF_02115"/>
    </source>
</evidence>
<organism>
    <name type="scientific">Methanococcus maripaludis (strain DSM 14266 / JCM 13030 / NBRC 101832 / S2 / LL)</name>
    <dbReference type="NCBI Taxonomy" id="267377"/>
    <lineage>
        <taxon>Archaea</taxon>
        <taxon>Methanobacteriati</taxon>
        <taxon>Methanobacteriota</taxon>
        <taxon>Methanomada group</taxon>
        <taxon>Methanococci</taxon>
        <taxon>Methanococcales</taxon>
        <taxon>Methanococcaceae</taxon>
        <taxon>Methanococcus</taxon>
    </lineage>
</organism>